<dbReference type="EC" id="7.1.1.-" evidence="1"/>
<dbReference type="EMBL" id="BX571965">
    <property type="protein sequence ID" value="CAH35214.1"/>
    <property type="molecule type" value="Genomic_DNA"/>
</dbReference>
<dbReference type="RefSeq" id="WP_004186558.1">
    <property type="nucleotide sequence ID" value="NZ_CP009538.1"/>
</dbReference>
<dbReference type="RefSeq" id="YP_107841.1">
    <property type="nucleotide sequence ID" value="NC_006350.1"/>
</dbReference>
<dbReference type="SMR" id="Q63VM5"/>
<dbReference type="STRING" id="272560.BPSL1219"/>
<dbReference type="GeneID" id="93059702"/>
<dbReference type="KEGG" id="bps:BPSL1219"/>
<dbReference type="PATRIC" id="fig|272560.51.peg.307"/>
<dbReference type="eggNOG" id="COG1143">
    <property type="taxonomic scope" value="Bacteria"/>
</dbReference>
<dbReference type="Proteomes" id="UP000000605">
    <property type="component" value="Chromosome 1"/>
</dbReference>
<dbReference type="GO" id="GO:0005886">
    <property type="term" value="C:plasma membrane"/>
    <property type="evidence" value="ECO:0007669"/>
    <property type="project" value="UniProtKB-SubCell"/>
</dbReference>
<dbReference type="GO" id="GO:0051539">
    <property type="term" value="F:4 iron, 4 sulfur cluster binding"/>
    <property type="evidence" value="ECO:0007669"/>
    <property type="project" value="UniProtKB-KW"/>
</dbReference>
<dbReference type="GO" id="GO:0005506">
    <property type="term" value="F:iron ion binding"/>
    <property type="evidence" value="ECO:0007669"/>
    <property type="project" value="UniProtKB-UniRule"/>
</dbReference>
<dbReference type="GO" id="GO:0050136">
    <property type="term" value="F:NADH:ubiquinone reductase (non-electrogenic) activity"/>
    <property type="evidence" value="ECO:0007669"/>
    <property type="project" value="UniProtKB-UniRule"/>
</dbReference>
<dbReference type="GO" id="GO:0048038">
    <property type="term" value="F:quinone binding"/>
    <property type="evidence" value="ECO:0007669"/>
    <property type="project" value="UniProtKB-KW"/>
</dbReference>
<dbReference type="GO" id="GO:0009060">
    <property type="term" value="P:aerobic respiration"/>
    <property type="evidence" value="ECO:0007669"/>
    <property type="project" value="TreeGrafter"/>
</dbReference>
<dbReference type="FunFam" id="3.30.70.3270:FF:000003">
    <property type="entry name" value="NADH-quinone oxidoreductase subunit I"/>
    <property type="match status" value="1"/>
</dbReference>
<dbReference type="Gene3D" id="3.30.70.3270">
    <property type="match status" value="1"/>
</dbReference>
<dbReference type="HAMAP" id="MF_01351">
    <property type="entry name" value="NDH1_NuoI"/>
    <property type="match status" value="1"/>
</dbReference>
<dbReference type="InterPro" id="IPR017896">
    <property type="entry name" value="4Fe4S_Fe-S-bd"/>
</dbReference>
<dbReference type="InterPro" id="IPR017900">
    <property type="entry name" value="4Fe4S_Fe_S_CS"/>
</dbReference>
<dbReference type="InterPro" id="IPR010226">
    <property type="entry name" value="NADH_quinone_OxRdtase_chainI"/>
</dbReference>
<dbReference type="NCBIfam" id="TIGR01971">
    <property type="entry name" value="NuoI"/>
    <property type="match status" value="1"/>
</dbReference>
<dbReference type="NCBIfam" id="NF004538">
    <property type="entry name" value="PRK05888.1-4"/>
    <property type="match status" value="1"/>
</dbReference>
<dbReference type="NCBIfam" id="NF004539">
    <property type="entry name" value="PRK05888.1-5"/>
    <property type="match status" value="1"/>
</dbReference>
<dbReference type="PANTHER" id="PTHR10849:SF20">
    <property type="entry name" value="NADH DEHYDROGENASE [UBIQUINONE] IRON-SULFUR PROTEIN 8, MITOCHONDRIAL"/>
    <property type="match status" value="1"/>
</dbReference>
<dbReference type="PANTHER" id="PTHR10849">
    <property type="entry name" value="NADH DEHYDROGENASE UBIQUINONE IRON-SULFUR PROTEIN 8, MITOCHONDRIAL"/>
    <property type="match status" value="1"/>
</dbReference>
<dbReference type="Pfam" id="PF12838">
    <property type="entry name" value="Fer4_7"/>
    <property type="match status" value="1"/>
</dbReference>
<dbReference type="SUPFAM" id="SSF54862">
    <property type="entry name" value="4Fe-4S ferredoxins"/>
    <property type="match status" value="1"/>
</dbReference>
<dbReference type="PROSITE" id="PS00198">
    <property type="entry name" value="4FE4S_FER_1"/>
    <property type="match status" value="2"/>
</dbReference>
<dbReference type="PROSITE" id="PS51379">
    <property type="entry name" value="4FE4S_FER_2"/>
    <property type="match status" value="2"/>
</dbReference>
<feature type="chain" id="PRO_0000250889" description="NADH-quinone oxidoreductase subunit I">
    <location>
        <begin position="1"/>
        <end position="162"/>
    </location>
</feature>
<feature type="domain" description="4Fe-4S ferredoxin-type 1" evidence="1">
    <location>
        <begin position="54"/>
        <end position="83"/>
    </location>
</feature>
<feature type="domain" description="4Fe-4S ferredoxin-type 2" evidence="1">
    <location>
        <begin position="93"/>
        <end position="122"/>
    </location>
</feature>
<feature type="binding site" evidence="1">
    <location>
        <position position="63"/>
    </location>
    <ligand>
        <name>[4Fe-4S] cluster</name>
        <dbReference type="ChEBI" id="CHEBI:49883"/>
        <label>1</label>
    </ligand>
</feature>
<feature type="binding site" evidence="1">
    <location>
        <position position="66"/>
    </location>
    <ligand>
        <name>[4Fe-4S] cluster</name>
        <dbReference type="ChEBI" id="CHEBI:49883"/>
        <label>1</label>
    </ligand>
</feature>
<feature type="binding site" evidence="1">
    <location>
        <position position="69"/>
    </location>
    <ligand>
        <name>[4Fe-4S] cluster</name>
        <dbReference type="ChEBI" id="CHEBI:49883"/>
        <label>1</label>
    </ligand>
</feature>
<feature type="binding site" evidence="1">
    <location>
        <position position="73"/>
    </location>
    <ligand>
        <name>[4Fe-4S] cluster</name>
        <dbReference type="ChEBI" id="CHEBI:49883"/>
        <label>2</label>
    </ligand>
</feature>
<feature type="binding site" evidence="1">
    <location>
        <position position="102"/>
    </location>
    <ligand>
        <name>[4Fe-4S] cluster</name>
        <dbReference type="ChEBI" id="CHEBI:49883"/>
        <label>2</label>
    </ligand>
</feature>
<feature type="binding site" evidence="1">
    <location>
        <position position="105"/>
    </location>
    <ligand>
        <name>[4Fe-4S] cluster</name>
        <dbReference type="ChEBI" id="CHEBI:49883"/>
        <label>2</label>
    </ligand>
</feature>
<feature type="binding site" evidence="1">
    <location>
        <position position="108"/>
    </location>
    <ligand>
        <name>[4Fe-4S] cluster</name>
        <dbReference type="ChEBI" id="CHEBI:49883"/>
        <label>2</label>
    </ligand>
</feature>
<feature type="binding site" evidence="1">
    <location>
        <position position="112"/>
    </location>
    <ligand>
        <name>[4Fe-4S] cluster</name>
        <dbReference type="ChEBI" id="CHEBI:49883"/>
        <label>1</label>
    </ligand>
</feature>
<gene>
    <name evidence="1" type="primary">nuoI</name>
    <name type="ordered locus">BPSL1219</name>
</gene>
<protein>
    <recommendedName>
        <fullName evidence="1">NADH-quinone oxidoreductase subunit I</fullName>
        <ecNumber evidence="1">7.1.1.-</ecNumber>
    </recommendedName>
    <alternativeName>
        <fullName evidence="1">NADH dehydrogenase I subunit I</fullName>
    </alternativeName>
    <alternativeName>
        <fullName evidence="1">NDH-1 subunit I</fullName>
    </alternativeName>
</protein>
<name>NUOI_BURPS</name>
<reference key="1">
    <citation type="journal article" date="2004" name="Proc. Natl. Acad. Sci. U.S.A.">
        <title>Genomic plasticity of the causative agent of melioidosis, Burkholderia pseudomallei.</title>
        <authorList>
            <person name="Holden M.T.G."/>
            <person name="Titball R.W."/>
            <person name="Peacock S.J."/>
            <person name="Cerdeno-Tarraga A.-M."/>
            <person name="Atkins T."/>
            <person name="Crossman L.C."/>
            <person name="Pitt T."/>
            <person name="Churcher C."/>
            <person name="Mungall K.L."/>
            <person name="Bentley S.D."/>
            <person name="Sebaihia M."/>
            <person name="Thomson N.R."/>
            <person name="Bason N."/>
            <person name="Beacham I.R."/>
            <person name="Brooks K."/>
            <person name="Brown K.A."/>
            <person name="Brown N.F."/>
            <person name="Challis G.L."/>
            <person name="Cherevach I."/>
            <person name="Chillingworth T."/>
            <person name="Cronin A."/>
            <person name="Crossett B."/>
            <person name="Davis P."/>
            <person name="DeShazer D."/>
            <person name="Feltwell T."/>
            <person name="Fraser A."/>
            <person name="Hance Z."/>
            <person name="Hauser H."/>
            <person name="Holroyd S."/>
            <person name="Jagels K."/>
            <person name="Keith K.E."/>
            <person name="Maddison M."/>
            <person name="Moule S."/>
            <person name="Price C."/>
            <person name="Quail M.A."/>
            <person name="Rabbinowitsch E."/>
            <person name="Rutherford K."/>
            <person name="Sanders M."/>
            <person name="Simmonds M."/>
            <person name="Songsivilai S."/>
            <person name="Stevens K."/>
            <person name="Tumapa S."/>
            <person name="Vesaratchavest M."/>
            <person name="Whitehead S."/>
            <person name="Yeats C."/>
            <person name="Barrell B.G."/>
            <person name="Oyston P.C.F."/>
            <person name="Parkhill J."/>
        </authorList>
    </citation>
    <scope>NUCLEOTIDE SEQUENCE [LARGE SCALE GENOMIC DNA]</scope>
    <source>
        <strain>K96243</strain>
    </source>
</reference>
<organism>
    <name type="scientific">Burkholderia pseudomallei (strain K96243)</name>
    <dbReference type="NCBI Taxonomy" id="272560"/>
    <lineage>
        <taxon>Bacteria</taxon>
        <taxon>Pseudomonadati</taxon>
        <taxon>Pseudomonadota</taxon>
        <taxon>Betaproteobacteria</taxon>
        <taxon>Burkholderiales</taxon>
        <taxon>Burkholderiaceae</taxon>
        <taxon>Burkholderia</taxon>
        <taxon>pseudomallei group</taxon>
    </lineage>
</organism>
<accession>Q63VM5</accession>
<sequence>MTAIQQFFKTFFLTELLKGLALTGRYTFKRKFTVQFPEEKTPISPRFRGLHALRRYENGEERCIACKLCEAVCPALAITIESETRADNTRRTTRYDIDLTKCIFCGFCEESCPVDSIVETQILEYHGEKRGDLYFTKDMLLAVGDRYEKEIAAAKAADARYR</sequence>
<comment type="function">
    <text evidence="1">NDH-1 shuttles electrons from NADH, via FMN and iron-sulfur (Fe-S) centers, to quinones in the respiratory chain. The immediate electron acceptor for the enzyme in this species is believed to be ubiquinone. Couples the redox reaction to proton translocation (for every two electrons transferred, four hydrogen ions are translocated across the cytoplasmic membrane), and thus conserves the redox energy in a proton gradient.</text>
</comment>
<comment type="catalytic activity">
    <reaction evidence="1">
        <text>a quinone + NADH + 5 H(+)(in) = a quinol + NAD(+) + 4 H(+)(out)</text>
        <dbReference type="Rhea" id="RHEA:57888"/>
        <dbReference type="ChEBI" id="CHEBI:15378"/>
        <dbReference type="ChEBI" id="CHEBI:24646"/>
        <dbReference type="ChEBI" id="CHEBI:57540"/>
        <dbReference type="ChEBI" id="CHEBI:57945"/>
        <dbReference type="ChEBI" id="CHEBI:132124"/>
    </reaction>
</comment>
<comment type="cofactor">
    <cofactor evidence="1">
        <name>[4Fe-4S] cluster</name>
        <dbReference type="ChEBI" id="CHEBI:49883"/>
    </cofactor>
    <text evidence="1">Binds 2 [4Fe-4S] clusters per subunit.</text>
</comment>
<comment type="subunit">
    <text evidence="1">NDH-1 is composed of 14 different subunits. Subunits NuoA, H, J, K, L, M, N constitute the membrane sector of the complex.</text>
</comment>
<comment type="subcellular location">
    <subcellularLocation>
        <location evidence="1">Cell inner membrane</location>
        <topology evidence="1">Peripheral membrane protein</topology>
    </subcellularLocation>
</comment>
<comment type="similarity">
    <text evidence="1">Belongs to the complex I 23 kDa subunit family.</text>
</comment>
<keyword id="KW-0004">4Fe-4S</keyword>
<keyword id="KW-0997">Cell inner membrane</keyword>
<keyword id="KW-1003">Cell membrane</keyword>
<keyword id="KW-0408">Iron</keyword>
<keyword id="KW-0411">Iron-sulfur</keyword>
<keyword id="KW-0472">Membrane</keyword>
<keyword id="KW-0479">Metal-binding</keyword>
<keyword id="KW-0520">NAD</keyword>
<keyword id="KW-0874">Quinone</keyword>
<keyword id="KW-1185">Reference proteome</keyword>
<keyword id="KW-0677">Repeat</keyword>
<keyword id="KW-1278">Translocase</keyword>
<keyword id="KW-0830">Ubiquinone</keyword>
<proteinExistence type="inferred from homology"/>
<evidence type="ECO:0000255" key="1">
    <source>
        <dbReference type="HAMAP-Rule" id="MF_01351"/>
    </source>
</evidence>